<sequence>MGLTSQLIPVLVCLLACTSHFVHGHKCDITLEEIIKTLNILTARKNSCMELPVADVFAAPKNTTEKETLCRAGIELRRIYRSHTCLNRFLSRLDRNLSGLASKTCSVNEAKTSTSTLKNLLERLKTIMKEKYSKC</sequence>
<reference key="1">
    <citation type="journal article" date="1994" name="Scand. J. Immunol.">
        <title>Cloning and expression of the cervine interleukin 4 gene.</title>
        <authorList>
            <person name="Hook S.M."/>
            <person name="Crawford A.M."/>
            <person name="Chinn D.N."/>
            <person name="Griffin J.F.T."/>
            <person name="Buchan G.S."/>
        </authorList>
    </citation>
    <scope>NUCLEOTIDE SEQUENCE [MRNA]</scope>
</reference>
<name>IL4_CEREL</name>
<gene>
    <name type="primary">IL4</name>
</gene>
<keyword id="KW-0075">B-cell activation</keyword>
<keyword id="KW-0202">Cytokine</keyword>
<keyword id="KW-1015">Disulfide bond</keyword>
<keyword id="KW-0325">Glycoprotein</keyword>
<keyword id="KW-0339">Growth factor</keyword>
<keyword id="KW-0964">Secreted</keyword>
<keyword id="KW-0732">Signal</keyword>
<organism>
    <name type="scientific">Cervus elaphus</name>
    <name type="common">Red deer</name>
    <dbReference type="NCBI Taxonomy" id="9860"/>
    <lineage>
        <taxon>Eukaryota</taxon>
        <taxon>Metazoa</taxon>
        <taxon>Chordata</taxon>
        <taxon>Craniata</taxon>
        <taxon>Vertebrata</taxon>
        <taxon>Euteleostomi</taxon>
        <taxon>Mammalia</taxon>
        <taxon>Eutheria</taxon>
        <taxon>Laurasiatheria</taxon>
        <taxon>Artiodactyla</taxon>
        <taxon>Ruminantia</taxon>
        <taxon>Pecora</taxon>
        <taxon>Cervidae</taxon>
        <taxon>Cervinae</taxon>
        <taxon>Cervus</taxon>
    </lineage>
</organism>
<feature type="signal peptide" evidence="3">
    <location>
        <begin position="1"/>
        <end position="24"/>
    </location>
</feature>
<feature type="chain" id="PRO_0000015528" description="Interleukin-4">
    <location>
        <begin position="25"/>
        <end position="135"/>
    </location>
</feature>
<feature type="glycosylation site" description="N-linked (GlcNAc...) asparagine" evidence="3">
    <location>
        <position position="62"/>
    </location>
</feature>
<feature type="glycosylation site" description="N-linked (GlcNAc...) asparagine" evidence="3">
    <location>
        <position position="96"/>
    </location>
</feature>
<feature type="disulfide bond" evidence="1">
    <location>
        <begin position="27"/>
        <end position="135"/>
    </location>
</feature>
<feature type="disulfide bond" evidence="1">
    <location>
        <begin position="48"/>
        <end position="85"/>
    </location>
</feature>
<feature type="disulfide bond" evidence="1">
    <location>
        <begin position="70"/>
        <end position="105"/>
    </location>
</feature>
<comment type="function">
    <text evidence="2">Participates in at least several B-cell activation processes as well as of other cell types. It is a costimulator of DNA-synthesis. It induces the expression of class II MHC molecules on resting B-cells. It enhances both secretion and cell surface expression of IgE and IgG1. It also regulates the expression of the low affinity Fc receptor for IgE (CD23) on both lymphocytes and monocytes. Positively regulates IL31RA expression in macrophages. Stimulates autophagy in dendritic cells by interfering with mTORC1 signaling and through the induction of RUFY4.</text>
</comment>
<comment type="subcellular location">
    <subcellularLocation>
        <location>Secreted</location>
    </subcellularLocation>
</comment>
<comment type="similarity">
    <text evidence="4">Belongs to the IL-4/IL-13 family.</text>
</comment>
<proteinExistence type="evidence at transcript level"/>
<dbReference type="EMBL" id="L07081">
    <property type="protein sequence ID" value="AAC37322.1"/>
    <property type="molecule type" value="mRNA"/>
</dbReference>
<dbReference type="PIR" id="I46142">
    <property type="entry name" value="I46142"/>
</dbReference>
<dbReference type="RefSeq" id="XP_043768075.1">
    <property type="nucleotide sequence ID" value="XM_043912140.1"/>
</dbReference>
<dbReference type="SMR" id="P51744"/>
<dbReference type="GlyCosmos" id="P51744">
    <property type="glycosylation" value="2 sites, No reported glycans"/>
</dbReference>
<dbReference type="GeneID" id="122699768"/>
<dbReference type="GO" id="GO:0005615">
    <property type="term" value="C:extracellular space"/>
    <property type="evidence" value="ECO:0007669"/>
    <property type="project" value="UniProtKB-KW"/>
</dbReference>
<dbReference type="GO" id="GO:0005125">
    <property type="term" value="F:cytokine activity"/>
    <property type="evidence" value="ECO:0007669"/>
    <property type="project" value="UniProtKB-KW"/>
</dbReference>
<dbReference type="GO" id="GO:0008083">
    <property type="term" value="F:growth factor activity"/>
    <property type="evidence" value="ECO:0007669"/>
    <property type="project" value="UniProtKB-KW"/>
</dbReference>
<dbReference type="GO" id="GO:0005136">
    <property type="term" value="F:interleukin-4 receptor binding"/>
    <property type="evidence" value="ECO:0007669"/>
    <property type="project" value="InterPro"/>
</dbReference>
<dbReference type="GO" id="GO:0042113">
    <property type="term" value="P:B cell activation"/>
    <property type="evidence" value="ECO:0007669"/>
    <property type="project" value="UniProtKB-KW"/>
</dbReference>
<dbReference type="GO" id="GO:0006955">
    <property type="term" value="P:immune response"/>
    <property type="evidence" value="ECO:0007669"/>
    <property type="project" value="InterPro"/>
</dbReference>
<dbReference type="GO" id="GO:0035771">
    <property type="term" value="P:interleukin-4-mediated signaling pathway"/>
    <property type="evidence" value="ECO:0007669"/>
    <property type="project" value="TreeGrafter"/>
</dbReference>
<dbReference type="GO" id="GO:0050728">
    <property type="term" value="P:negative regulation of inflammatory response"/>
    <property type="evidence" value="ECO:0007669"/>
    <property type="project" value="TreeGrafter"/>
</dbReference>
<dbReference type="GO" id="GO:0045893">
    <property type="term" value="P:positive regulation of DNA-templated transcription"/>
    <property type="evidence" value="ECO:0007669"/>
    <property type="project" value="TreeGrafter"/>
</dbReference>
<dbReference type="GO" id="GO:0016239">
    <property type="term" value="P:positive regulation of macroautophagy"/>
    <property type="evidence" value="ECO:0000250"/>
    <property type="project" value="UniProtKB"/>
</dbReference>
<dbReference type="GO" id="GO:0050776">
    <property type="term" value="P:regulation of immune response"/>
    <property type="evidence" value="ECO:0007669"/>
    <property type="project" value="TreeGrafter"/>
</dbReference>
<dbReference type="FunFam" id="1.20.1250.10:FF:000014">
    <property type="entry name" value="Interleukin-4"/>
    <property type="match status" value="1"/>
</dbReference>
<dbReference type="Gene3D" id="1.20.1250.10">
    <property type="match status" value="1"/>
</dbReference>
<dbReference type="InterPro" id="IPR009079">
    <property type="entry name" value="4_helix_cytokine-like_core"/>
</dbReference>
<dbReference type="InterPro" id="IPR002354">
    <property type="entry name" value="IL-4"/>
</dbReference>
<dbReference type="InterPro" id="IPR001325">
    <property type="entry name" value="IL-4/IL-13"/>
</dbReference>
<dbReference type="InterPro" id="IPR018096">
    <property type="entry name" value="IL-4/IL-13_CS"/>
</dbReference>
<dbReference type="PANTHER" id="PTHR47401">
    <property type="entry name" value="INTERLEUKIN-4"/>
    <property type="match status" value="1"/>
</dbReference>
<dbReference type="PANTHER" id="PTHR47401:SF1">
    <property type="entry name" value="INTERLEUKIN-4"/>
    <property type="match status" value="1"/>
</dbReference>
<dbReference type="Pfam" id="PF00727">
    <property type="entry name" value="IL4"/>
    <property type="match status" value="1"/>
</dbReference>
<dbReference type="PIRSF" id="PIRSF001941">
    <property type="entry name" value="Interleukin_4"/>
    <property type="match status" value="1"/>
</dbReference>
<dbReference type="PRINTS" id="PR00431">
    <property type="entry name" value="INTERLEUKIN4"/>
</dbReference>
<dbReference type="SMART" id="SM00190">
    <property type="entry name" value="IL4_13"/>
    <property type="match status" value="1"/>
</dbReference>
<dbReference type="SUPFAM" id="SSF47266">
    <property type="entry name" value="4-helical cytokines"/>
    <property type="match status" value="1"/>
</dbReference>
<dbReference type="PROSITE" id="PS00838">
    <property type="entry name" value="INTERLEUKIN_4_13"/>
    <property type="match status" value="1"/>
</dbReference>
<accession>P51744</accession>
<evidence type="ECO:0000250" key="1"/>
<evidence type="ECO:0000250" key="2">
    <source>
        <dbReference type="UniProtKB" id="P07750"/>
    </source>
</evidence>
<evidence type="ECO:0000255" key="3"/>
<evidence type="ECO:0000305" key="4"/>
<protein>
    <recommendedName>
        <fullName>Interleukin-4</fullName>
        <shortName>IL-4</shortName>
    </recommendedName>
    <alternativeName>
        <fullName>B-cell stimulatory factor 1</fullName>
        <shortName>BSF-1</shortName>
    </alternativeName>
    <alternativeName>
        <fullName>Lymphocyte stimulatory factor 1</fullName>
    </alternativeName>
</protein>